<evidence type="ECO:0000255" key="1">
    <source>
        <dbReference type="HAMAP-Rule" id="MF_00632"/>
    </source>
</evidence>
<dbReference type="EMBL" id="CP000964">
    <property type="protein sequence ID" value="ACI09400.1"/>
    <property type="molecule type" value="Genomic_DNA"/>
</dbReference>
<dbReference type="SMR" id="B5Y0W4"/>
<dbReference type="KEGG" id="kpe:KPK_4305"/>
<dbReference type="HOGENOM" id="CLU_099839_1_0_6"/>
<dbReference type="BioCyc" id="KPNE507522:GI0B-4286-MONOMER"/>
<dbReference type="Proteomes" id="UP000001734">
    <property type="component" value="Chromosome"/>
</dbReference>
<dbReference type="GO" id="GO:0005829">
    <property type="term" value="C:cytosol"/>
    <property type="evidence" value="ECO:0007669"/>
    <property type="project" value="TreeGrafter"/>
</dbReference>
<dbReference type="GO" id="GO:0000166">
    <property type="term" value="F:nucleotide binding"/>
    <property type="evidence" value="ECO:0007669"/>
    <property type="project" value="TreeGrafter"/>
</dbReference>
<dbReference type="CDD" id="cd11740">
    <property type="entry name" value="YajQ_like"/>
    <property type="match status" value="1"/>
</dbReference>
<dbReference type="FunFam" id="3.30.70.860:FF:000001">
    <property type="entry name" value="UPF0234 protein YajQ"/>
    <property type="match status" value="1"/>
</dbReference>
<dbReference type="FunFam" id="3.30.70.990:FF:000001">
    <property type="entry name" value="UPF0234 protein YajQ"/>
    <property type="match status" value="1"/>
</dbReference>
<dbReference type="Gene3D" id="3.30.70.860">
    <property type="match status" value="1"/>
</dbReference>
<dbReference type="Gene3D" id="3.30.70.990">
    <property type="entry name" value="YajQ-like, domain 2"/>
    <property type="match status" value="1"/>
</dbReference>
<dbReference type="HAMAP" id="MF_00632">
    <property type="entry name" value="YajQ"/>
    <property type="match status" value="1"/>
</dbReference>
<dbReference type="InterPro" id="IPR007551">
    <property type="entry name" value="DUF520"/>
</dbReference>
<dbReference type="InterPro" id="IPR035571">
    <property type="entry name" value="UPF0234-like_C"/>
</dbReference>
<dbReference type="InterPro" id="IPR035570">
    <property type="entry name" value="UPF0234_N"/>
</dbReference>
<dbReference type="InterPro" id="IPR036183">
    <property type="entry name" value="YajQ-like_sf"/>
</dbReference>
<dbReference type="NCBIfam" id="NF003819">
    <property type="entry name" value="PRK05412.1"/>
    <property type="match status" value="1"/>
</dbReference>
<dbReference type="PANTHER" id="PTHR30476">
    <property type="entry name" value="UPF0234 PROTEIN YAJQ"/>
    <property type="match status" value="1"/>
</dbReference>
<dbReference type="PANTHER" id="PTHR30476:SF0">
    <property type="entry name" value="UPF0234 PROTEIN YAJQ"/>
    <property type="match status" value="1"/>
</dbReference>
<dbReference type="Pfam" id="PF04461">
    <property type="entry name" value="DUF520"/>
    <property type="match status" value="1"/>
</dbReference>
<dbReference type="SUPFAM" id="SSF89963">
    <property type="entry name" value="YajQ-like"/>
    <property type="match status" value="2"/>
</dbReference>
<sequence>MPSFDIVSEVDLQEARNAVDNASREVESRFDFRGVEATFELNDANKTIKVLSESDFQVNQLLDILRAKLLKRGIEGTSLDVPEDIVHSGKTWFVEAKLKQGIESAVQKKIVKLIKDSKLKVQAQIQGEEIRVTGKSRDDLQSVMALVRGGDLGQPFQFKNFRD</sequence>
<feature type="chain" id="PRO_1000130633" description="Nucleotide-binding protein KPK_4305">
    <location>
        <begin position="1"/>
        <end position="163"/>
    </location>
</feature>
<gene>
    <name type="ordered locus">KPK_4305</name>
</gene>
<keyword id="KW-0547">Nucleotide-binding</keyword>
<name>Y4305_KLEP3</name>
<comment type="function">
    <text evidence="1">Nucleotide-binding protein.</text>
</comment>
<comment type="similarity">
    <text evidence="1">Belongs to the YajQ family.</text>
</comment>
<protein>
    <recommendedName>
        <fullName evidence="1">Nucleotide-binding protein KPK_4305</fullName>
    </recommendedName>
</protein>
<accession>B5Y0W4</accession>
<proteinExistence type="inferred from homology"/>
<reference key="1">
    <citation type="journal article" date="2008" name="PLoS Genet.">
        <title>Complete genome sequence of the N2-fixing broad host range endophyte Klebsiella pneumoniae 342 and virulence predictions verified in mice.</title>
        <authorList>
            <person name="Fouts D.E."/>
            <person name="Tyler H.L."/>
            <person name="DeBoy R.T."/>
            <person name="Daugherty S."/>
            <person name="Ren Q."/>
            <person name="Badger J.H."/>
            <person name="Durkin A.S."/>
            <person name="Huot H."/>
            <person name="Shrivastava S."/>
            <person name="Kothari S."/>
            <person name="Dodson R.J."/>
            <person name="Mohamoud Y."/>
            <person name="Khouri H."/>
            <person name="Roesch L.F.W."/>
            <person name="Krogfelt K.A."/>
            <person name="Struve C."/>
            <person name="Triplett E.W."/>
            <person name="Methe B.A."/>
        </authorList>
    </citation>
    <scope>NUCLEOTIDE SEQUENCE [LARGE SCALE GENOMIC DNA]</scope>
    <source>
        <strain>342</strain>
    </source>
</reference>
<organism>
    <name type="scientific">Klebsiella pneumoniae (strain 342)</name>
    <dbReference type="NCBI Taxonomy" id="507522"/>
    <lineage>
        <taxon>Bacteria</taxon>
        <taxon>Pseudomonadati</taxon>
        <taxon>Pseudomonadota</taxon>
        <taxon>Gammaproteobacteria</taxon>
        <taxon>Enterobacterales</taxon>
        <taxon>Enterobacteriaceae</taxon>
        <taxon>Klebsiella/Raoultella group</taxon>
        <taxon>Klebsiella</taxon>
        <taxon>Klebsiella pneumoniae complex</taxon>
    </lineage>
</organism>